<feature type="chain" id="PRO_0000120994" description="COP9 signalosome complex subunit 4">
    <location>
        <begin position="1" status="less than"/>
        <end position="45" status="greater than"/>
    </location>
</feature>
<feature type="non-consecutive residues" evidence="2">
    <location>
        <begin position="19"/>
        <end position="20"/>
    </location>
</feature>
<feature type="non-terminal residue">
    <location>
        <position position="1"/>
    </location>
</feature>
<feature type="non-terminal residue">
    <location>
        <position position="45"/>
    </location>
</feature>
<dbReference type="IntAct" id="P68359">
    <property type="interactions" value="5"/>
</dbReference>
<dbReference type="GO" id="GO:0008180">
    <property type="term" value="C:COP9 signalosome"/>
    <property type="evidence" value="ECO:0007669"/>
    <property type="project" value="UniProtKB-KW"/>
</dbReference>
<dbReference type="GO" id="GO:0005737">
    <property type="term" value="C:cytoplasm"/>
    <property type="evidence" value="ECO:0007669"/>
    <property type="project" value="UniProtKB-SubCell"/>
</dbReference>
<dbReference type="GO" id="GO:0009585">
    <property type="term" value="P:red, far-red light phototransduction"/>
    <property type="evidence" value="ECO:0007669"/>
    <property type="project" value="UniProtKB-KW"/>
</dbReference>
<keyword id="KW-0963">Cytoplasm</keyword>
<keyword id="KW-0217">Developmental protein</keyword>
<keyword id="KW-0903">Direct protein sequencing</keyword>
<keyword id="KW-0539">Nucleus</keyword>
<keyword id="KW-0607">Phytochrome signaling pathway</keyword>
<keyword id="KW-0736">Signalosome</keyword>
<name>CSN4_BRAOL</name>
<gene>
    <name type="primary">CSN4</name>
    <name type="synonym">COP8</name>
    <name type="synonym">FUS4</name>
</gene>
<comment type="function">
    <text evidence="1">Component of the COP9 signalosome complex (CSN), a complex involved in various cellular and developmental processes such as photomorphogenesis and auxin and jasmonate responses. The CSN complex is an essential regulator of the ubiquitin (Ubl) conjugation pathway by mediating the deneddylation of the cullin subunits of SCF-type E3 ligase complexes, leading to decrease the Ubl ligase activity of SCF. It is involved in repression of photomorphogenesis in darkness by regulating the activity of COP1-containing Ubl ligase complexes (By similarity).</text>
</comment>
<comment type="subunit">
    <text>Component of the CSN complex, probably composed of CSN1, CSN2, CSN3, CSN4, CSN5 (CSN5A or CSN5B), CSN6 (CSN6A or CSN6B), CSN7 and CSN8.</text>
</comment>
<comment type="interaction">
    <interactant intactId="EBI-530932">
        <id>P68359</id>
    </interactant>
    <interactant intactId="EBI-530927">
        <id>P68353</id>
        <label>CSN2</label>
    </interactant>
    <organismsDiffer>false</organismsDiffer>
    <experiments>2</experiments>
</comment>
<comment type="subcellular location">
    <subcellularLocation>
        <location>Cytoplasm</location>
    </subcellularLocation>
    <subcellularLocation>
        <location>Nucleus</location>
    </subcellularLocation>
</comment>
<comment type="similarity">
    <text evidence="2">Belongs to the CSN4 family.</text>
</comment>
<evidence type="ECO:0000250" key="1"/>
<evidence type="ECO:0000305" key="2"/>
<accession>P68359</accession>
<protein>
    <recommendedName>
        <fullName>COP9 signalosome complex subunit 4</fullName>
        <shortName>Signalosome subunit 4</shortName>
    </recommendedName>
    <alternativeName>
        <fullName>Constitutive photomorphogenesis protein 8</fullName>
    </alternativeName>
    <alternativeName>
        <fullName>FUSCA protein 4</fullName>
        <shortName>FUSCA4</shortName>
    </alternativeName>
</protein>
<proteinExistence type="evidence at protein level"/>
<organism>
    <name type="scientific">Brassica oleracea</name>
    <name type="common">Wild cabbage</name>
    <dbReference type="NCBI Taxonomy" id="3712"/>
    <lineage>
        <taxon>Eukaryota</taxon>
        <taxon>Viridiplantae</taxon>
        <taxon>Streptophyta</taxon>
        <taxon>Embryophyta</taxon>
        <taxon>Tracheophyta</taxon>
        <taxon>Spermatophyta</taxon>
        <taxon>Magnoliopsida</taxon>
        <taxon>eudicotyledons</taxon>
        <taxon>Gunneridae</taxon>
        <taxon>Pentapetalae</taxon>
        <taxon>rosids</taxon>
        <taxon>malvids</taxon>
        <taxon>Brassicales</taxon>
        <taxon>Brassicaceae</taxon>
        <taxon>Brassiceae</taxon>
        <taxon>Brassica</taxon>
    </lineage>
</organism>
<sequence length="45" mass="5227">KRKFLDAALRYYSISQIEKKAYLPDKSTVLDRAMIEHNNLLSASK</sequence>
<reference key="1">
    <citation type="journal article" date="1999" name="Plant Cell">
        <title>Arabidopsis cop8 and fus4 mutations define the same gene that encodes subunit 4 of the COP9 signalosome.</title>
        <authorList>
            <person name="Serino G."/>
            <person name="Tsuge T."/>
            <person name="Kwok S."/>
            <person name="Matsui M."/>
            <person name="Wei N."/>
            <person name="Deng X.-W."/>
        </authorList>
    </citation>
    <scope>PROTEIN SEQUENCE</scope>
    <scope>COMPONENT OF THE CSN COMPLEX WITH CSN1; CSN2; CSN3; CSN5; CSN6; CSN7 AND CSN8</scope>
</reference>